<comment type="function">
    <text evidence="1">Catalyzes the adenylation of flavin mononucleotide (FMN) to form flavin adenine dinucleotide (FAD) coenzyme.</text>
</comment>
<comment type="catalytic activity">
    <reaction evidence="1">
        <text>FMN + ATP + H(+) = FAD + diphosphate</text>
        <dbReference type="Rhea" id="RHEA:17237"/>
        <dbReference type="ChEBI" id="CHEBI:15378"/>
        <dbReference type="ChEBI" id="CHEBI:30616"/>
        <dbReference type="ChEBI" id="CHEBI:33019"/>
        <dbReference type="ChEBI" id="CHEBI:57692"/>
        <dbReference type="ChEBI" id="CHEBI:58210"/>
        <dbReference type="EC" id="2.7.7.2"/>
    </reaction>
</comment>
<comment type="pathway">
    <text evidence="1">Cofactor biosynthesis; FAD biosynthesis; FAD from FMN: step 1/1.</text>
</comment>
<comment type="subcellular location">
    <subcellularLocation>
        <location evidence="4">Cytoplasm</location>
    </subcellularLocation>
</comment>
<comment type="miscellaneous">
    <text evidence="1">FAD1 is essential for growth.</text>
</comment>
<comment type="similarity">
    <text evidence="3">Belongs to the PAPS reductase family. FAD1 subfamily.</text>
</comment>
<feature type="chain" id="PRO_0000100691" description="Flavin adenine dinucleotide synthase">
    <location>
        <begin position="1"/>
        <end position="306"/>
    </location>
</feature>
<feature type="binding site" evidence="5">
    <location>
        <position position="59"/>
    </location>
    <ligand>
        <name>FAD</name>
        <dbReference type="ChEBI" id="CHEBI:57692"/>
    </ligand>
</feature>
<feature type="binding site" evidence="5">
    <location>
        <position position="107"/>
    </location>
    <ligand>
        <name>FAD</name>
        <dbReference type="ChEBI" id="CHEBI:57692"/>
    </ligand>
</feature>
<feature type="binding site" evidence="5">
    <location>
        <position position="164"/>
    </location>
    <ligand>
        <name>FAD</name>
        <dbReference type="ChEBI" id="CHEBI:57692"/>
    </ligand>
</feature>
<feature type="binding site" evidence="5">
    <location>
        <begin position="182"/>
        <end position="185"/>
    </location>
    <ligand>
        <name>FAD</name>
        <dbReference type="ChEBI" id="CHEBI:57692"/>
    </ligand>
</feature>
<feature type="binding site" evidence="5">
    <location>
        <position position="190"/>
    </location>
    <ligand>
        <name>FAD</name>
        <dbReference type="ChEBI" id="CHEBI:57692"/>
    </ligand>
</feature>
<feature type="binding site" evidence="5">
    <location>
        <position position="300"/>
    </location>
    <ligand>
        <name>FAD</name>
        <dbReference type="ChEBI" id="CHEBI:57692"/>
    </ligand>
</feature>
<feature type="helix" evidence="6">
    <location>
        <begin position="3"/>
        <end position="18"/>
    </location>
</feature>
<feature type="helix" evidence="6">
    <location>
        <begin position="25"/>
        <end position="43"/>
    </location>
</feature>
<feature type="turn" evidence="6">
    <location>
        <begin position="44"/>
        <end position="48"/>
    </location>
</feature>
<feature type="strand" evidence="6">
    <location>
        <begin position="51"/>
        <end position="59"/>
    </location>
</feature>
<feature type="helix" evidence="6">
    <location>
        <begin position="64"/>
        <end position="87"/>
    </location>
</feature>
<feature type="strand" evidence="6">
    <location>
        <begin position="102"/>
        <end position="106"/>
    </location>
</feature>
<feature type="helix" evidence="6">
    <location>
        <begin position="114"/>
        <end position="126"/>
    </location>
</feature>
<feature type="strand" evidence="6">
    <location>
        <begin position="129"/>
        <end position="133"/>
    </location>
</feature>
<feature type="helix" evidence="6">
    <location>
        <begin position="144"/>
        <end position="154"/>
    </location>
</feature>
<feature type="strand" evidence="6">
    <location>
        <begin position="160"/>
        <end position="162"/>
    </location>
</feature>
<feature type="strand" evidence="6">
    <location>
        <begin position="169"/>
        <end position="171"/>
    </location>
</feature>
<feature type="strand" evidence="6">
    <location>
        <begin position="177"/>
        <end position="180"/>
    </location>
</feature>
<feature type="strand" evidence="6">
    <location>
        <begin position="189"/>
        <end position="191"/>
    </location>
</feature>
<feature type="turn" evidence="6">
    <location>
        <begin position="193"/>
        <end position="196"/>
    </location>
</feature>
<feature type="helix" evidence="6">
    <location>
        <begin position="199"/>
        <end position="209"/>
    </location>
</feature>
<feature type="helix" evidence="6">
    <location>
        <begin position="215"/>
        <end position="218"/>
    </location>
</feature>
<feature type="turn" evidence="6">
    <location>
        <begin position="227"/>
        <end position="229"/>
    </location>
</feature>
<feature type="helix" evidence="6">
    <location>
        <begin position="234"/>
        <end position="236"/>
    </location>
</feature>
<feature type="helix" evidence="6">
    <location>
        <begin position="238"/>
        <end position="240"/>
    </location>
</feature>
<feature type="helix" evidence="6">
    <location>
        <begin position="248"/>
        <end position="252"/>
    </location>
</feature>
<feature type="turn" evidence="6">
    <location>
        <begin position="255"/>
        <end position="257"/>
    </location>
</feature>
<feature type="helix" evidence="6">
    <location>
        <begin position="274"/>
        <end position="279"/>
    </location>
</feature>
<feature type="turn" evidence="6">
    <location>
        <begin position="280"/>
        <end position="282"/>
    </location>
</feature>
<feature type="helix" evidence="6">
    <location>
        <begin position="290"/>
        <end position="292"/>
    </location>
</feature>
<feature type="helix" evidence="6">
    <location>
        <begin position="296"/>
        <end position="298"/>
    </location>
</feature>
<feature type="turn" evidence="6">
    <location>
        <begin position="299"/>
        <end position="302"/>
    </location>
</feature>
<name>FAD1_YEAST</name>
<organism>
    <name type="scientific">Saccharomyces cerevisiae (strain ATCC 204508 / S288c)</name>
    <name type="common">Baker's yeast</name>
    <dbReference type="NCBI Taxonomy" id="559292"/>
    <lineage>
        <taxon>Eukaryota</taxon>
        <taxon>Fungi</taxon>
        <taxon>Dikarya</taxon>
        <taxon>Ascomycota</taxon>
        <taxon>Saccharomycotina</taxon>
        <taxon>Saccharomycetes</taxon>
        <taxon>Saccharomycetales</taxon>
        <taxon>Saccharomycetaceae</taxon>
        <taxon>Saccharomyces</taxon>
    </lineage>
</organism>
<gene>
    <name evidence="2" type="primary">FAD1</name>
    <name type="ordered locus">YDL045C</name>
    <name type="ORF">D2702</name>
</gene>
<protein>
    <recommendedName>
        <fullName evidence="2">Flavin adenine dinucleotide synthase</fullName>
        <shortName evidence="2">FAD synthase</shortName>
        <ecNumber evidence="1">2.7.7.2</ecNumber>
    </recommendedName>
    <alternativeName>
        <fullName>FAD pyrophosphorylase</fullName>
    </alternativeName>
    <alternativeName>
        <fullName>FMN adenylyltransferase</fullName>
    </alternativeName>
</protein>
<keyword id="KW-0002">3D-structure</keyword>
<keyword id="KW-0067">ATP-binding</keyword>
<keyword id="KW-0963">Cytoplasm</keyword>
<keyword id="KW-0274">FAD</keyword>
<keyword id="KW-0285">Flavoprotein</keyword>
<keyword id="KW-0288">FMN</keyword>
<keyword id="KW-0547">Nucleotide-binding</keyword>
<keyword id="KW-0548">Nucleotidyltransferase</keyword>
<keyword id="KW-1185">Reference proteome</keyword>
<keyword id="KW-0808">Transferase</keyword>
<proteinExistence type="evidence at protein level"/>
<reference key="1">
    <citation type="journal article" date="1995" name="Mol. Cell. Biol.">
        <title>Cloning and characterization of FAD1, the structural gene for flavin adenine dinucleotide synthetase of Saccharomyces cerevisiae.</title>
        <authorList>
            <person name="Wu M."/>
            <person name="Repetto B."/>
            <person name="Glerum D.M."/>
            <person name="Tzagoloff A."/>
        </authorList>
    </citation>
    <scope>NUCLEOTIDE SEQUENCE [GENOMIC DNA]</scope>
    <scope>FUNCTION</scope>
    <scope>CATALYTIC ACTIVITY</scope>
    <source>
        <strain>W303-1A / D273-10B</strain>
    </source>
</reference>
<reference key="2">
    <citation type="journal article" date="1997" name="Yeast">
        <title>The sequence of a 36.7 kb segment on the left arm of chromosome IV from Saccharomyces cerevisiae reveals 20 non-overlapping open reading frames (ORFs) including SIT4, FAD1, NAM1, RNA11, SIR2, NAT1, PRP9, ACT2 and MPS1 and 11 new ORFs.</title>
        <authorList>
            <person name="Saren A.-M."/>
            <person name="Laamanen P."/>
            <person name="Lejarcegui J.B."/>
            <person name="Paulin L."/>
        </authorList>
    </citation>
    <scope>NUCLEOTIDE SEQUENCE [GENOMIC DNA]</scope>
    <source>
        <strain>ATCC 204508 / S288c</strain>
    </source>
</reference>
<reference key="3">
    <citation type="journal article" date="1997" name="Nature">
        <title>The nucleotide sequence of Saccharomyces cerevisiae chromosome IV.</title>
        <authorList>
            <person name="Jacq C."/>
            <person name="Alt-Moerbe J."/>
            <person name="Andre B."/>
            <person name="Arnold W."/>
            <person name="Bahr A."/>
            <person name="Ballesta J.P.G."/>
            <person name="Bargues M."/>
            <person name="Baron L."/>
            <person name="Becker A."/>
            <person name="Biteau N."/>
            <person name="Bloecker H."/>
            <person name="Blugeon C."/>
            <person name="Boskovic J."/>
            <person name="Brandt P."/>
            <person name="Brueckner M."/>
            <person name="Buitrago M.J."/>
            <person name="Coster F."/>
            <person name="Delaveau T."/>
            <person name="del Rey F."/>
            <person name="Dujon B."/>
            <person name="Eide L.G."/>
            <person name="Garcia-Cantalejo J.M."/>
            <person name="Goffeau A."/>
            <person name="Gomez-Peris A."/>
            <person name="Granotier C."/>
            <person name="Hanemann V."/>
            <person name="Hankeln T."/>
            <person name="Hoheisel J.D."/>
            <person name="Jaeger W."/>
            <person name="Jimenez A."/>
            <person name="Jonniaux J.-L."/>
            <person name="Kraemer C."/>
            <person name="Kuester H."/>
            <person name="Laamanen P."/>
            <person name="Legros Y."/>
            <person name="Louis E.J."/>
            <person name="Moeller-Rieker S."/>
            <person name="Monnet A."/>
            <person name="Moro M."/>
            <person name="Mueller-Auer S."/>
            <person name="Nussbaumer B."/>
            <person name="Paricio N."/>
            <person name="Paulin L."/>
            <person name="Perea J."/>
            <person name="Perez-Alonso M."/>
            <person name="Perez-Ortin J.E."/>
            <person name="Pohl T.M."/>
            <person name="Prydz H."/>
            <person name="Purnelle B."/>
            <person name="Rasmussen S.W."/>
            <person name="Remacha M.A."/>
            <person name="Revuelta J.L."/>
            <person name="Rieger M."/>
            <person name="Salom D."/>
            <person name="Saluz H.P."/>
            <person name="Saiz J.E."/>
            <person name="Saren A.-M."/>
            <person name="Schaefer M."/>
            <person name="Scharfe M."/>
            <person name="Schmidt E.R."/>
            <person name="Schneider C."/>
            <person name="Scholler P."/>
            <person name="Schwarz S."/>
            <person name="Soler-Mira A."/>
            <person name="Urrestarazu L.A."/>
            <person name="Verhasselt P."/>
            <person name="Vissers S."/>
            <person name="Voet M."/>
            <person name="Volckaert G."/>
            <person name="Wagner G."/>
            <person name="Wambutt R."/>
            <person name="Wedler E."/>
            <person name="Wedler H."/>
            <person name="Woelfl S."/>
            <person name="Harris D.E."/>
            <person name="Bowman S."/>
            <person name="Brown D."/>
            <person name="Churcher C.M."/>
            <person name="Connor R."/>
            <person name="Dedman K."/>
            <person name="Gentles S."/>
            <person name="Hamlin N."/>
            <person name="Hunt S."/>
            <person name="Jones L."/>
            <person name="McDonald S."/>
            <person name="Murphy L.D."/>
            <person name="Niblett D."/>
            <person name="Odell C."/>
            <person name="Oliver K."/>
            <person name="Rajandream M.A."/>
            <person name="Richards C."/>
            <person name="Shore L."/>
            <person name="Walsh S.V."/>
            <person name="Barrell B.G."/>
            <person name="Dietrich F.S."/>
            <person name="Mulligan J.T."/>
            <person name="Allen E."/>
            <person name="Araujo R."/>
            <person name="Aviles E."/>
            <person name="Berno A."/>
            <person name="Carpenter J."/>
            <person name="Chen E."/>
            <person name="Cherry J.M."/>
            <person name="Chung E."/>
            <person name="Duncan M."/>
            <person name="Hunicke-Smith S."/>
            <person name="Hyman R.W."/>
            <person name="Komp C."/>
            <person name="Lashkari D."/>
            <person name="Lew H."/>
            <person name="Lin D."/>
            <person name="Mosedale D."/>
            <person name="Nakahara K."/>
            <person name="Namath A."/>
            <person name="Oefner P."/>
            <person name="Oh C."/>
            <person name="Petel F.X."/>
            <person name="Roberts D."/>
            <person name="Schramm S."/>
            <person name="Schroeder M."/>
            <person name="Shogren T."/>
            <person name="Shroff N."/>
            <person name="Winant A."/>
            <person name="Yelton M.A."/>
            <person name="Botstein D."/>
            <person name="Davis R.W."/>
            <person name="Johnston M."/>
            <person name="Andrews S."/>
            <person name="Brinkman R."/>
            <person name="Cooper J."/>
            <person name="Ding H."/>
            <person name="Du Z."/>
            <person name="Favello A."/>
            <person name="Fulton L."/>
            <person name="Gattung S."/>
            <person name="Greco T."/>
            <person name="Hallsworth K."/>
            <person name="Hawkins J."/>
            <person name="Hillier L.W."/>
            <person name="Jier M."/>
            <person name="Johnson D."/>
            <person name="Johnston L."/>
            <person name="Kirsten J."/>
            <person name="Kucaba T."/>
            <person name="Langston Y."/>
            <person name="Latreille P."/>
            <person name="Le T."/>
            <person name="Mardis E."/>
            <person name="Menezes S."/>
            <person name="Miller N."/>
            <person name="Nhan M."/>
            <person name="Pauley A."/>
            <person name="Peluso D."/>
            <person name="Rifkin L."/>
            <person name="Riles L."/>
            <person name="Taich A."/>
            <person name="Trevaskis E."/>
            <person name="Vignati D."/>
            <person name="Wilcox L."/>
            <person name="Wohldman P."/>
            <person name="Vaudin M."/>
            <person name="Wilson R."/>
            <person name="Waterston R."/>
            <person name="Albermann K."/>
            <person name="Hani J."/>
            <person name="Heumann K."/>
            <person name="Kleine K."/>
            <person name="Mewes H.-W."/>
            <person name="Zollner A."/>
            <person name="Zaccaria P."/>
        </authorList>
    </citation>
    <scope>NUCLEOTIDE SEQUENCE [LARGE SCALE GENOMIC DNA]</scope>
    <source>
        <strain>ATCC 204508 / S288c</strain>
    </source>
</reference>
<reference key="4">
    <citation type="journal article" date="2014" name="G3 (Bethesda)">
        <title>The reference genome sequence of Saccharomyces cerevisiae: Then and now.</title>
        <authorList>
            <person name="Engel S.R."/>
            <person name="Dietrich F.S."/>
            <person name="Fisk D.G."/>
            <person name="Binkley G."/>
            <person name="Balakrishnan R."/>
            <person name="Costanzo M.C."/>
            <person name="Dwight S.S."/>
            <person name="Hitz B.C."/>
            <person name="Karra K."/>
            <person name="Nash R.S."/>
            <person name="Weng S."/>
            <person name="Wong E.D."/>
            <person name="Lloyd P."/>
            <person name="Skrzypek M.S."/>
            <person name="Miyasato S.R."/>
            <person name="Simison M."/>
            <person name="Cherry J.M."/>
        </authorList>
    </citation>
    <scope>GENOME REANNOTATION</scope>
    <source>
        <strain>ATCC 204508 / S288c</strain>
    </source>
</reference>
<reference key="5">
    <citation type="journal article" date="2007" name="Genome Res.">
        <title>Approaching a complete repository of sequence-verified protein-encoding clones for Saccharomyces cerevisiae.</title>
        <authorList>
            <person name="Hu Y."/>
            <person name="Rolfs A."/>
            <person name="Bhullar B."/>
            <person name="Murthy T.V.S."/>
            <person name="Zhu C."/>
            <person name="Berger M.F."/>
            <person name="Camargo A.A."/>
            <person name="Kelley F."/>
            <person name="McCarron S."/>
            <person name="Jepson D."/>
            <person name="Richardson A."/>
            <person name="Raphael J."/>
            <person name="Moreira D."/>
            <person name="Taycher E."/>
            <person name="Zuo D."/>
            <person name="Mohr S."/>
            <person name="Kane M.F."/>
            <person name="Williamson J."/>
            <person name="Simpson A.J.G."/>
            <person name="Bulyk M.L."/>
            <person name="Harlow E."/>
            <person name="Marsischky G."/>
            <person name="Kolodner R.D."/>
            <person name="LaBaer J."/>
        </authorList>
    </citation>
    <scope>NUCLEOTIDE SEQUENCE [GENOMIC DNA]</scope>
    <source>
        <strain>ATCC 204508 / S288c</strain>
    </source>
</reference>
<reference evidence="5" key="6">
    <citation type="journal article" date="2010" name="J. Mol. Biol.">
        <title>Crystal structure of yeast FAD synthetase (Fad1) in complex with FAD.</title>
        <authorList>
            <person name="Leulliot N."/>
            <person name="Blondeau K."/>
            <person name="Keller J."/>
            <person name="Ulryck N."/>
            <person name="Quevillon-Cheruel S."/>
            <person name="van Tilbeurgh H."/>
        </authorList>
    </citation>
    <scope>X-RAY CRYSTALLOGRAPHY (1.90 ANGSTROMS) IN COMPLEX WITH FAD</scope>
</reference>
<accession>P38913</accession>
<accession>D6VRV1</accession>
<evidence type="ECO:0000269" key="1">
    <source>
    </source>
</evidence>
<evidence type="ECO:0000303" key="2">
    <source>
    </source>
</evidence>
<evidence type="ECO:0000305" key="3"/>
<evidence type="ECO:0000305" key="4">
    <source>
    </source>
</evidence>
<evidence type="ECO:0007744" key="5">
    <source>
        <dbReference type="PDB" id="2WSI"/>
    </source>
</evidence>
<evidence type="ECO:0007829" key="6">
    <source>
        <dbReference type="PDB" id="2WSI"/>
    </source>
</evidence>
<sequence>MQLSKAAEMCYEITNSYLHIDQKSQIIASTQEAIRLTRKYLLSEIFVRWSPLNGEISFSYNGGKDCQVLLLLYLSCLWEYFFIKAQNSQFDFEFQSFPMQRLPTVFIDQEETFPTLENFVLETSERYCLSLYESQRQSGASVNMADAFRDFIKIYPETEAIVIGIRHTDPFGEALKPIQRTDSNWPDFMRLQPLLHWDLTNIWSFLLYSNEPICGLYGKGFTSIGGINNSLPNPHLRKDSNNPALHFEWEIIHAFGKDAEGERSSAINTSPISVVDKERFSKYHDNYYPGWYLVDDTLERAGRIKN</sequence>
<dbReference type="EC" id="2.7.7.2" evidence="1"/>
<dbReference type="EMBL" id="U12331">
    <property type="protein sequence ID" value="AAA65730.1"/>
    <property type="molecule type" value="Genomic_DNA"/>
</dbReference>
<dbReference type="EMBL" id="Z71781">
    <property type="protein sequence ID" value="CAA96444.1"/>
    <property type="molecule type" value="Genomic_DNA"/>
</dbReference>
<dbReference type="EMBL" id="Z74093">
    <property type="protein sequence ID" value="CAA98604.1"/>
    <property type="molecule type" value="Genomic_DNA"/>
</dbReference>
<dbReference type="EMBL" id="AY558157">
    <property type="protein sequence ID" value="AAS56483.1"/>
    <property type="molecule type" value="Genomic_DNA"/>
</dbReference>
<dbReference type="EMBL" id="BK006938">
    <property type="protein sequence ID" value="DAA11811.1"/>
    <property type="molecule type" value="Genomic_DNA"/>
</dbReference>
<dbReference type="PIR" id="S47906">
    <property type="entry name" value="S47906"/>
</dbReference>
<dbReference type="RefSeq" id="NP_010239.1">
    <property type="nucleotide sequence ID" value="NM_001180104.1"/>
</dbReference>
<dbReference type="PDB" id="2WSI">
    <property type="method" value="X-ray"/>
    <property type="resolution" value="1.90 A"/>
    <property type="chains" value="A=1-306"/>
</dbReference>
<dbReference type="PDBsum" id="2WSI"/>
<dbReference type="SMR" id="P38913"/>
<dbReference type="BioGRID" id="32014">
    <property type="interactions" value="191"/>
</dbReference>
<dbReference type="DIP" id="DIP-4735N"/>
<dbReference type="FunCoup" id="P38913">
    <property type="interactions" value="213"/>
</dbReference>
<dbReference type="IntAct" id="P38913">
    <property type="interactions" value="3"/>
</dbReference>
<dbReference type="STRING" id="4932.YDL045C"/>
<dbReference type="iPTMnet" id="P38913"/>
<dbReference type="PaxDb" id="4932-YDL045C"/>
<dbReference type="PeptideAtlas" id="P38913"/>
<dbReference type="TopDownProteomics" id="P38913"/>
<dbReference type="EnsemblFungi" id="YDL045C_mRNA">
    <property type="protein sequence ID" value="YDL045C"/>
    <property type="gene ID" value="YDL045C"/>
</dbReference>
<dbReference type="GeneID" id="851516"/>
<dbReference type="KEGG" id="sce:YDL045C"/>
<dbReference type="AGR" id="SGD:S000002203"/>
<dbReference type="SGD" id="S000002203">
    <property type="gene designation" value="FAD1"/>
</dbReference>
<dbReference type="VEuPathDB" id="FungiDB:YDL045C"/>
<dbReference type="eggNOG" id="KOG2644">
    <property type="taxonomic scope" value="Eukaryota"/>
</dbReference>
<dbReference type="GeneTree" id="ENSGT00390000007266"/>
<dbReference type="HOGENOM" id="CLU_056971_0_1_1"/>
<dbReference type="InParanoid" id="P38913"/>
<dbReference type="OMA" id="TVFIDQE"/>
<dbReference type="OrthoDB" id="270728at2759"/>
<dbReference type="BioCyc" id="MetaCyc:YDL045C-MONOMER"/>
<dbReference type="BioCyc" id="YEAST:YDL045C-MONOMER"/>
<dbReference type="BRENDA" id="2.7.7.2">
    <property type="organism ID" value="984"/>
</dbReference>
<dbReference type="Reactome" id="R-SCE-196843">
    <property type="pathway name" value="Vitamin B2 (riboflavin) metabolism"/>
</dbReference>
<dbReference type="UniPathway" id="UPA00277">
    <property type="reaction ID" value="UER00407"/>
</dbReference>
<dbReference type="BioGRID-ORCS" id="851516">
    <property type="hits" value="0 hits in 10 CRISPR screens"/>
</dbReference>
<dbReference type="EvolutionaryTrace" id="P38913"/>
<dbReference type="PRO" id="PR:P38913"/>
<dbReference type="Proteomes" id="UP000002311">
    <property type="component" value="Chromosome IV"/>
</dbReference>
<dbReference type="RNAct" id="P38913">
    <property type="molecule type" value="protein"/>
</dbReference>
<dbReference type="GO" id="GO:0005737">
    <property type="term" value="C:cytoplasm"/>
    <property type="evidence" value="ECO:0000314"/>
    <property type="project" value="SGD"/>
</dbReference>
<dbReference type="GO" id="GO:0005524">
    <property type="term" value="F:ATP binding"/>
    <property type="evidence" value="ECO:0007669"/>
    <property type="project" value="UniProtKB-KW"/>
</dbReference>
<dbReference type="GO" id="GO:0003919">
    <property type="term" value="F:FMN adenylyltransferase activity"/>
    <property type="evidence" value="ECO:0000314"/>
    <property type="project" value="SGD"/>
</dbReference>
<dbReference type="GO" id="GO:0006747">
    <property type="term" value="P:FAD biosynthetic process"/>
    <property type="evidence" value="ECO:0000314"/>
    <property type="project" value="SGD"/>
</dbReference>
<dbReference type="CDD" id="cd23948">
    <property type="entry name" value="FAD_synthase"/>
    <property type="match status" value="1"/>
</dbReference>
<dbReference type="FunFam" id="3.40.50.620:FF:000245">
    <property type="entry name" value="FAD synthetase"/>
    <property type="match status" value="1"/>
</dbReference>
<dbReference type="Gene3D" id="3.40.50.620">
    <property type="entry name" value="HUPs"/>
    <property type="match status" value="1"/>
</dbReference>
<dbReference type="InterPro" id="IPR002500">
    <property type="entry name" value="PAPS_reduct_dom"/>
</dbReference>
<dbReference type="InterPro" id="IPR014729">
    <property type="entry name" value="Rossmann-like_a/b/a_fold"/>
</dbReference>
<dbReference type="PANTHER" id="PTHR23293:SF9">
    <property type="entry name" value="FAD SYNTHASE"/>
    <property type="match status" value="1"/>
</dbReference>
<dbReference type="PANTHER" id="PTHR23293">
    <property type="entry name" value="FAD SYNTHETASE-RELATED FMN ADENYLYLTRANSFERASE"/>
    <property type="match status" value="1"/>
</dbReference>
<dbReference type="Pfam" id="PF01507">
    <property type="entry name" value="PAPS_reduct"/>
    <property type="match status" value="1"/>
</dbReference>
<dbReference type="SUPFAM" id="SSF52402">
    <property type="entry name" value="Adenine nucleotide alpha hydrolases-like"/>
    <property type="match status" value="1"/>
</dbReference>